<proteinExistence type="evidence at transcript level"/>
<comment type="function">
    <text>Possible taste receptor.</text>
</comment>
<comment type="subcellular location">
    <subcellularLocation>
        <location>Cell membrane</location>
        <topology>Multi-pass membrane protein</topology>
    </subcellularLocation>
</comment>
<comment type="tissue specificity">
    <text>Tongue specific.</text>
</comment>
<comment type="similarity">
    <text evidence="2">Belongs to the G-protein coupled receptor 1 family.</text>
</comment>
<gene>
    <name type="primary">Olr1571</name>
</gene>
<sequence>LLMCNLCFADICFTSASIPTNLVNIQTKNKVITYEGCISQVYFFILFGVLDNFLLAVMAYDRYVAICHPLHYTVIMNRRLCGLLVLGSWVTTALNSLLQSSMALRLSFCTDLKIPHFVCELNQLVLLACNDTFPNDMVMYFAAVLLGGGPLAGILYSYSKIVSSIRAISSSQGKYKAFSTCASHLSVVSLFYSTLLGVYLSSSFTQNSHSTARASVMYSVVTPMLNPFIYSLRNKDLMGALRRLFRRKP</sequence>
<reference key="1">
    <citation type="journal article" date="1993" name="FEBS Lett.">
        <title>Multiple genes for G protein-coupled receptors and their expression in lingual epithelia.</title>
        <authorList>
            <person name="Abe K."/>
            <person name="Kusakabe Y."/>
            <person name="Tanemura K."/>
            <person name="Emori Y."/>
            <person name="Arai S."/>
        </authorList>
    </citation>
    <scope>NUCLEOTIDE SEQUENCE [MRNA] OF 1-232</scope>
    <source>
        <strain>Fischer</strain>
        <tissue>Tongue epithelium</tissue>
    </source>
</reference>
<reference key="2">
    <citation type="journal article" date="2004" name="Nature">
        <title>Genome sequence of the Brown Norway rat yields insights into mammalian evolution.</title>
        <authorList>
            <person name="Gibbs R.A."/>
            <person name="Weinstock G.M."/>
            <person name="Metzker M.L."/>
            <person name="Muzny D.M."/>
            <person name="Sodergren E.J."/>
            <person name="Scherer S."/>
            <person name="Scott G."/>
            <person name="Steffen D."/>
            <person name="Worley K.C."/>
            <person name="Burch P.E."/>
            <person name="Okwuonu G."/>
            <person name="Hines S."/>
            <person name="Lewis L."/>
            <person name="Deramo C."/>
            <person name="Delgado O."/>
            <person name="Dugan-Rocha S."/>
            <person name="Miner G."/>
            <person name="Morgan M."/>
            <person name="Hawes A."/>
            <person name="Gill R."/>
            <person name="Holt R.A."/>
            <person name="Adams M.D."/>
            <person name="Amanatides P.G."/>
            <person name="Baden-Tillson H."/>
            <person name="Barnstead M."/>
            <person name="Chin S."/>
            <person name="Evans C.A."/>
            <person name="Ferriera S."/>
            <person name="Fosler C."/>
            <person name="Glodek A."/>
            <person name="Gu Z."/>
            <person name="Jennings D."/>
            <person name="Kraft C.L."/>
            <person name="Nguyen T."/>
            <person name="Pfannkoch C.M."/>
            <person name="Sitter C."/>
            <person name="Sutton G.G."/>
            <person name="Venter J.C."/>
            <person name="Woodage T."/>
            <person name="Smith D."/>
            <person name="Lee H.-M."/>
            <person name="Gustafson E."/>
            <person name="Cahill P."/>
            <person name="Kana A."/>
            <person name="Doucette-Stamm L."/>
            <person name="Weinstock K."/>
            <person name="Fechtel K."/>
            <person name="Weiss R.B."/>
            <person name="Dunn D.M."/>
            <person name="Green E.D."/>
            <person name="Blakesley R.W."/>
            <person name="Bouffard G.G."/>
            <person name="De Jong P.J."/>
            <person name="Osoegawa K."/>
            <person name="Zhu B."/>
            <person name="Marra M."/>
            <person name="Schein J."/>
            <person name="Bosdet I."/>
            <person name="Fjell C."/>
            <person name="Jones S."/>
            <person name="Krzywinski M."/>
            <person name="Mathewson C."/>
            <person name="Siddiqui A."/>
            <person name="Wye N."/>
            <person name="McPherson J."/>
            <person name="Zhao S."/>
            <person name="Fraser C.M."/>
            <person name="Shetty J."/>
            <person name="Shatsman S."/>
            <person name="Geer K."/>
            <person name="Chen Y."/>
            <person name="Abramzon S."/>
            <person name="Nierman W.C."/>
            <person name="Havlak P.H."/>
            <person name="Chen R."/>
            <person name="Durbin K.J."/>
            <person name="Egan A."/>
            <person name="Ren Y."/>
            <person name="Song X.-Z."/>
            <person name="Li B."/>
            <person name="Liu Y."/>
            <person name="Qin X."/>
            <person name="Cawley S."/>
            <person name="Cooney A.J."/>
            <person name="D'Souza L.M."/>
            <person name="Martin K."/>
            <person name="Wu J.Q."/>
            <person name="Gonzalez-Garay M.L."/>
            <person name="Jackson A.R."/>
            <person name="Kalafus K.J."/>
            <person name="McLeod M.P."/>
            <person name="Milosavljevic A."/>
            <person name="Virk D."/>
            <person name="Volkov A."/>
            <person name="Wheeler D.A."/>
            <person name="Zhang Z."/>
            <person name="Bailey J.A."/>
            <person name="Eichler E.E."/>
            <person name="Tuzun E."/>
            <person name="Birney E."/>
            <person name="Mongin E."/>
            <person name="Ureta-Vidal A."/>
            <person name="Woodwark C."/>
            <person name="Zdobnov E."/>
            <person name="Bork P."/>
            <person name="Suyama M."/>
            <person name="Torrents D."/>
            <person name="Alexandersson M."/>
            <person name="Trask B.J."/>
            <person name="Young J.M."/>
            <person name="Huang H."/>
            <person name="Wang H."/>
            <person name="Xing H."/>
            <person name="Daniels S."/>
            <person name="Gietzen D."/>
            <person name="Schmidt J."/>
            <person name="Stevens K."/>
            <person name="Vitt U."/>
            <person name="Wingrove J."/>
            <person name="Camara F."/>
            <person name="Mar Alba M."/>
            <person name="Abril J.F."/>
            <person name="Guigo R."/>
            <person name="Smit A."/>
            <person name="Dubchak I."/>
            <person name="Rubin E.M."/>
            <person name="Couronne O."/>
            <person name="Poliakov A."/>
            <person name="Huebner N."/>
            <person name="Ganten D."/>
            <person name="Goesele C."/>
            <person name="Hummel O."/>
            <person name="Kreitler T."/>
            <person name="Lee Y.-A."/>
            <person name="Monti J."/>
            <person name="Schulz H."/>
            <person name="Zimdahl H."/>
            <person name="Himmelbauer H."/>
            <person name="Lehrach H."/>
            <person name="Jacob H.J."/>
            <person name="Bromberg S."/>
            <person name="Gullings-Handley J."/>
            <person name="Jensen-Seaman M.I."/>
            <person name="Kwitek A.E."/>
            <person name="Lazar J."/>
            <person name="Pasko D."/>
            <person name="Tonellato P.J."/>
            <person name="Twigger S."/>
            <person name="Ponting C.P."/>
            <person name="Duarte J.M."/>
            <person name="Rice S."/>
            <person name="Goodstadt L."/>
            <person name="Beatson S.A."/>
            <person name="Emes R.D."/>
            <person name="Winter E.E."/>
            <person name="Webber C."/>
            <person name="Brandt P."/>
            <person name="Nyakatura G."/>
            <person name="Adetobi M."/>
            <person name="Chiaromonte F."/>
            <person name="Elnitski L."/>
            <person name="Eswara P."/>
            <person name="Hardison R.C."/>
            <person name="Hou M."/>
            <person name="Kolbe D."/>
            <person name="Makova K."/>
            <person name="Miller W."/>
            <person name="Nekrutenko A."/>
            <person name="Riemer C."/>
            <person name="Schwartz S."/>
            <person name="Taylor J."/>
            <person name="Yang S."/>
            <person name="Zhang Y."/>
            <person name="Lindpaintner K."/>
            <person name="Andrews T.D."/>
            <person name="Caccamo M."/>
            <person name="Clamp M."/>
            <person name="Clarke L."/>
            <person name="Curwen V."/>
            <person name="Durbin R.M."/>
            <person name="Eyras E."/>
            <person name="Searle S.M."/>
            <person name="Cooper G.M."/>
            <person name="Batzoglou S."/>
            <person name="Brudno M."/>
            <person name="Sidow A."/>
            <person name="Stone E.A."/>
            <person name="Payseur B.A."/>
            <person name="Bourque G."/>
            <person name="Lopez-Otin C."/>
            <person name="Puente X.S."/>
            <person name="Chakrabarti K."/>
            <person name="Chatterji S."/>
            <person name="Dewey C."/>
            <person name="Pachter L."/>
            <person name="Bray N."/>
            <person name="Yap V.B."/>
            <person name="Caspi A."/>
            <person name="Tesler G."/>
            <person name="Pevzner P.A."/>
            <person name="Haussler D."/>
            <person name="Roskin K.M."/>
            <person name="Baertsch R."/>
            <person name="Clawson H."/>
            <person name="Furey T.S."/>
            <person name="Hinrichs A.S."/>
            <person name="Karolchik D."/>
            <person name="Kent W.J."/>
            <person name="Rosenbloom K.R."/>
            <person name="Trumbower H."/>
            <person name="Weirauch M."/>
            <person name="Cooper D.N."/>
            <person name="Stenson P.D."/>
            <person name="Ma B."/>
            <person name="Brent M."/>
            <person name="Arumugam M."/>
            <person name="Shteynberg D."/>
            <person name="Copley R.R."/>
            <person name="Taylor M.S."/>
            <person name="Riethman H."/>
            <person name="Mudunuri U."/>
            <person name="Peterson J."/>
            <person name="Guyer M."/>
            <person name="Felsenfeld A."/>
            <person name="Old S."/>
            <person name="Mockrin S."/>
            <person name="Collins F.S."/>
        </authorList>
    </citation>
    <scope>NUCLEOTIDE SEQUENCE [LARGE SCALE GENOMIC DNA] OF 29-249</scope>
    <source>
        <strain>Brown Norway</strain>
    </source>
</reference>
<reference key="3">
    <citation type="journal article" date="2000" name="Genetics">
        <title>Evolution of odorant receptors expressed in mammalian testes.</title>
        <authorList>
            <person name="Branscomb A."/>
            <person name="Seger J."/>
            <person name="White R.L."/>
        </authorList>
    </citation>
    <scope>NUCLEOTIDE SEQUENCE [GENOMIC DNA] OF 80-212</scope>
    <source>
        <strain>Sprague-Dawley</strain>
    </source>
</reference>
<keyword id="KW-1003">Cell membrane</keyword>
<keyword id="KW-1015">Disulfide bond</keyword>
<keyword id="KW-0297">G-protein coupled receptor</keyword>
<keyword id="KW-0325">Glycoprotein</keyword>
<keyword id="KW-0472">Membrane</keyword>
<keyword id="KW-0552">Olfaction</keyword>
<keyword id="KW-0675">Receptor</keyword>
<keyword id="KW-1185">Reference proteome</keyword>
<keyword id="KW-0716">Sensory transduction</keyword>
<keyword id="KW-0807">Transducer</keyword>
<keyword id="KW-0812">Transmembrane</keyword>
<keyword id="KW-1133">Transmembrane helix</keyword>
<protein>
    <recommendedName>
        <fullName>Olfactory receptor 1571</fullName>
    </recommendedName>
    <alternativeName>
        <fullName>Putative gustatory receptor PTE58</fullName>
    </alternativeName>
    <alternativeName>
        <fullName>Testis-expressed odorant receptor mT15r</fullName>
    </alternativeName>
</protein>
<accession>P35899</accession>
<accession>Q9ERW9</accession>
<organism>
    <name type="scientific">Rattus norvegicus</name>
    <name type="common">Rat</name>
    <dbReference type="NCBI Taxonomy" id="10116"/>
    <lineage>
        <taxon>Eukaryota</taxon>
        <taxon>Metazoa</taxon>
        <taxon>Chordata</taxon>
        <taxon>Craniata</taxon>
        <taxon>Vertebrata</taxon>
        <taxon>Euteleostomi</taxon>
        <taxon>Mammalia</taxon>
        <taxon>Eutheria</taxon>
        <taxon>Euarchontoglires</taxon>
        <taxon>Glires</taxon>
        <taxon>Rodentia</taxon>
        <taxon>Myomorpha</taxon>
        <taxon>Muroidea</taxon>
        <taxon>Muridae</taxon>
        <taxon>Murinae</taxon>
        <taxon>Rattus</taxon>
    </lineage>
</organism>
<evidence type="ECO:0000255" key="1"/>
<evidence type="ECO:0000255" key="2">
    <source>
        <dbReference type="PROSITE-ProRule" id="PRU00521"/>
    </source>
</evidence>
<evidence type="ECO:0000305" key="3"/>
<dbReference type="EMBL" id="AABR03081387">
    <property type="status" value="NOT_ANNOTATED_CDS"/>
    <property type="molecule type" value="Genomic_DNA"/>
</dbReference>
<dbReference type="EMBL" id="AF271052">
    <property type="protein sequence ID" value="AAG21325.1"/>
    <property type="molecule type" value="Genomic_DNA"/>
</dbReference>
<dbReference type="PIR" id="S29001">
    <property type="entry name" value="S29001"/>
</dbReference>
<dbReference type="SMR" id="P35899"/>
<dbReference type="GlyCosmos" id="P35899">
    <property type="glycosylation" value="1 site, No reported glycans"/>
</dbReference>
<dbReference type="GlyGen" id="P35899">
    <property type="glycosylation" value="1 site"/>
</dbReference>
<dbReference type="AGR" id="RGD:1333684"/>
<dbReference type="RGD" id="1333684">
    <property type="gene designation" value="Olr1571"/>
</dbReference>
<dbReference type="InParanoid" id="P35899"/>
<dbReference type="PhylomeDB" id="P35899"/>
<dbReference type="Proteomes" id="UP000002494">
    <property type="component" value="Unplaced"/>
</dbReference>
<dbReference type="GO" id="GO:0005886">
    <property type="term" value="C:plasma membrane"/>
    <property type="evidence" value="ECO:0000318"/>
    <property type="project" value="GO_Central"/>
</dbReference>
<dbReference type="GO" id="GO:0004930">
    <property type="term" value="F:G protein-coupled receptor activity"/>
    <property type="evidence" value="ECO:0007669"/>
    <property type="project" value="UniProtKB-KW"/>
</dbReference>
<dbReference type="GO" id="GO:0004984">
    <property type="term" value="F:olfactory receptor activity"/>
    <property type="evidence" value="ECO:0000318"/>
    <property type="project" value="GO_Central"/>
</dbReference>
<dbReference type="GO" id="GO:0007165">
    <property type="term" value="P:signal transduction"/>
    <property type="evidence" value="ECO:0000318"/>
    <property type="project" value="GO_Central"/>
</dbReference>
<dbReference type="FunFam" id="1.20.1070.10:FF:000015">
    <property type="entry name" value="Olfactory receptor"/>
    <property type="match status" value="1"/>
</dbReference>
<dbReference type="Gene3D" id="1.20.1070.10">
    <property type="entry name" value="Rhodopsin 7-helix transmembrane proteins"/>
    <property type="match status" value="1"/>
</dbReference>
<dbReference type="InterPro" id="IPR000276">
    <property type="entry name" value="GPCR_Rhodpsn"/>
</dbReference>
<dbReference type="InterPro" id="IPR017452">
    <property type="entry name" value="GPCR_Rhodpsn_7TM"/>
</dbReference>
<dbReference type="InterPro" id="IPR000725">
    <property type="entry name" value="Olfact_rcpt"/>
</dbReference>
<dbReference type="PANTHER" id="PTHR48001">
    <property type="entry name" value="OLFACTORY RECEPTOR"/>
    <property type="match status" value="1"/>
</dbReference>
<dbReference type="Pfam" id="PF13853">
    <property type="entry name" value="7tm_4"/>
    <property type="match status" value="1"/>
</dbReference>
<dbReference type="PRINTS" id="PR00245">
    <property type="entry name" value="OLFACTORYR"/>
</dbReference>
<dbReference type="SUPFAM" id="SSF81321">
    <property type="entry name" value="Family A G protein-coupled receptor-like"/>
    <property type="match status" value="1"/>
</dbReference>
<dbReference type="PROSITE" id="PS00237">
    <property type="entry name" value="G_PROTEIN_RECEP_F1_1"/>
    <property type="match status" value="1"/>
</dbReference>
<dbReference type="PROSITE" id="PS50262">
    <property type="entry name" value="G_PROTEIN_RECEP_F1_2"/>
    <property type="match status" value="1"/>
</dbReference>
<feature type="chain" id="PRO_0000069671" description="Olfactory receptor 1571">
    <location>
        <begin position="1" status="less than"/>
        <end position="249"/>
    </location>
</feature>
<feature type="transmembrane region" description="Helical; Name=2" evidence="1">
    <location>
        <begin position="1" status="less than"/>
        <end position="9"/>
    </location>
</feature>
<feature type="topological domain" description="Extracellular" evidence="1">
    <location>
        <begin position="10"/>
        <end position="40"/>
    </location>
</feature>
<feature type="transmembrane region" description="Helical; Name=3" evidence="1">
    <location>
        <begin position="41"/>
        <end position="60"/>
    </location>
</feature>
<feature type="topological domain" description="Cytoplasmic" evidence="1">
    <location>
        <begin position="61"/>
        <end position="82"/>
    </location>
</feature>
<feature type="transmembrane region" description="Helical; Name=4" evidence="1">
    <location>
        <begin position="83"/>
        <end position="103"/>
    </location>
</feature>
<feature type="topological domain" description="Extracellular" evidence="1">
    <location>
        <begin position="104"/>
        <end position="136"/>
    </location>
</feature>
<feature type="transmembrane region" description="Helical; Name=5" evidence="1">
    <location>
        <begin position="137"/>
        <end position="158"/>
    </location>
</feature>
<feature type="topological domain" description="Cytoplasmic" evidence="1">
    <location>
        <begin position="159"/>
        <end position="180"/>
    </location>
</feature>
<feature type="transmembrane region" description="Helical; Name=6" evidence="1">
    <location>
        <begin position="181"/>
        <end position="200"/>
    </location>
</feature>
<feature type="topological domain" description="Extracellular" evidence="1">
    <location>
        <begin position="201"/>
        <end position="210"/>
    </location>
</feature>
<feature type="transmembrane region" description="Helical; Name=7" evidence="1">
    <location>
        <begin position="211"/>
        <end position="232"/>
    </location>
</feature>
<feature type="topological domain" description="Cytoplasmic" evidence="1">
    <location>
        <begin position="233"/>
        <end position="249"/>
    </location>
</feature>
<feature type="glycosylation site" description="N-linked (GlcNAc...) asparagine" evidence="1">
    <location>
        <position position="130"/>
    </location>
</feature>
<feature type="disulfide bond" evidence="2">
    <location>
        <begin position="37"/>
        <end position="119"/>
    </location>
</feature>
<feature type="sequence conflict" description="In Ref. 1." evidence="3" ref="1">
    <original>SL</original>
    <variation>FF</variation>
    <location>
        <begin position="231"/>
        <end position="232"/>
    </location>
</feature>
<feature type="non-terminal residue">
    <location>
        <position position="1"/>
    </location>
</feature>
<name>O1571_RAT</name>